<sequence length="1388" mass="156878">MASTVSTCQDASPYQPRNYQLEMLEASMKENIIVAMDTGSGKTHIAVLRIKAELDICSPDKVVWFLAPTVALCIQQHEVIASNLPAVRTRTLTGLDKVELWTDQSIWDAVLNGYRVIVSTHAVLADALSHGFVKMSQLALLIFDEAHHCTRRHAANKIMQDFYHPTLTKSGPAAVPRIMGLTASPVVRSNHQELLMVESNLDAVCRTPRLHRQELLKFTHRPHLQQIWYTPTDPAGFRSASLTLGALYHAWENLDIGDDPYIQRLRKSPLDDRALKKALLTGKTYCREQLRRFVDRSRHIFEELGEWAAEYYIYASIKQLRDRVRDSYMSGDWDEAEKAYLVDFLSKIPTSDIHFALNDPDGFRISPKFESLLNFLDSSDQREFSGLIFVKQRVTVSAMTSLLSVHPYTRERFRCAAYVGWSNSSASKDILGDLLNMQLQRDTLDDFRSGRKNLIIATDVLEEGIDLSACSVVVCYDKPPNLKSFIQRRGRARRKQSTFAIMFPTDDTSADVSRWQDLEQAMIEAYQDDERQLQSVSALESLDEEVMERLTGDSTSAVLTADMAMAHLHHFCAVLPPQPYVDMRPVFSFETNEDGLLKGTVILPSCVHPKVRRTEGRRWWRTERAAMKETAFQAYKSLYEFGLVNDHLLPLTKKPELKTHDLGSMPSILETSEQYDPWIEWAYSWSSPDIHQSRIVVKMNEGRGDELCMRLIGPEYLPPLSPMTLFWNSSTTFTVTFKAAERVPLVPLSSVEDMRAITALYLKATSSRVCSAERDFMALFAPDLHHTELKGWLDTYEGSDPAMEVYSRGHNPLLMGVVRDHSRYGEPFLFRKWLVSHQNPSCSIVELECAPFPHRRNFLRRQTLANSQVDVDEAIPDSAAKNPIVAAEACTIDRLPFTMAIFGLFISAIVEQLEIELIATRLRDTILRDVSFKSTDHIITAISTPLAHRLTNYQRYEFLGDSILKFSVSCQLFFQHPNWHEGYLSEGRDMIVQNPRLAKAALDTGLDAYIVTKRLASRKWSAPLISEKLGRVPAKRQMSTKVLADVVEALIGAAYVDGGHSTAQACIRRFLPEINLHAVDTRTAARSVAPESARHMMNDRLKDHIGYTFEDESLLVEALTHPSCDYDSTTQSYQRLEYLGDAVLDMVIVSAIFNHRIQRPQGDMTKIKHAVVNANLLAFLCMEFAISEEKLDVAQTSKDSFAVTSSQESVELWRFMRYRGQGLKAARDASLARHRALRDEIASSLLQAPHYPWHALSRLNADKFFSDIIESVLGAIFVDSGGNLAPCEVFVEQIGLMAYLRRILDHGIDVRHPRSVVQQLAKTNIQFVLQRVPTEEGGASYQCSVQMEQAELFVVTGCLTAEEAEVTAAVEAIKFLTRDEGSTPLNKS</sequence>
<organism>
    <name type="scientific">Aspergillus fumigatus (strain ATCC MYA-4609 / CBS 101355 / FGSC A1100 / Af293)</name>
    <name type="common">Neosartorya fumigata</name>
    <dbReference type="NCBI Taxonomy" id="330879"/>
    <lineage>
        <taxon>Eukaryota</taxon>
        <taxon>Fungi</taxon>
        <taxon>Dikarya</taxon>
        <taxon>Ascomycota</taxon>
        <taxon>Pezizomycotina</taxon>
        <taxon>Eurotiomycetes</taxon>
        <taxon>Eurotiomycetidae</taxon>
        <taxon>Eurotiales</taxon>
        <taxon>Aspergillaceae</taxon>
        <taxon>Aspergillus</taxon>
        <taxon>Aspergillus subgen. Fumigati</taxon>
    </lineage>
</organism>
<name>DCL2_ASPFU</name>
<gene>
    <name type="primary">dcl2</name>
    <name type="ORF">AFUA_4G02930</name>
</gene>
<evidence type="ECO:0000250" key="1"/>
<evidence type="ECO:0000255" key="2">
    <source>
        <dbReference type="PROSITE-ProRule" id="PRU00177"/>
    </source>
</evidence>
<evidence type="ECO:0000255" key="3">
    <source>
        <dbReference type="PROSITE-ProRule" id="PRU00541"/>
    </source>
</evidence>
<evidence type="ECO:0000255" key="4">
    <source>
        <dbReference type="PROSITE-ProRule" id="PRU00542"/>
    </source>
</evidence>
<evidence type="ECO:0000255" key="5">
    <source>
        <dbReference type="PROSITE-ProRule" id="PRU00657"/>
    </source>
</evidence>
<evidence type="ECO:0000305" key="6"/>
<reference key="1">
    <citation type="journal article" date="2005" name="Nature">
        <title>Genomic sequence of the pathogenic and allergenic filamentous fungus Aspergillus fumigatus.</title>
        <authorList>
            <person name="Nierman W.C."/>
            <person name="Pain A."/>
            <person name="Anderson M.J."/>
            <person name="Wortman J.R."/>
            <person name="Kim H.S."/>
            <person name="Arroyo J."/>
            <person name="Berriman M."/>
            <person name="Abe K."/>
            <person name="Archer D.B."/>
            <person name="Bermejo C."/>
            <person name="Bennett J.W."/>
            <person name="Bowyer P."/>
            <person name="Chen D."/>
            <person name="Collins M."/>
            <person name="Coulsen R."/>
            <person name="Davies R."/>
            <person name="Dyer P.S."/>
            <person name="Farman M.L."/>
            <person name="Fedorova N."/>
            <person name="Fedorova N.D."/>
            <person name="Feldblyum T.V."/>
            <person name="Fischer R."/>
            <person name="Fosker N."/>
            <person name="Fraser A."/>
            <person name="Garcia J.L."/>
            <person name="Garcia M.J."/>
            <person name="Goble A."/>
            <person name="Goldman G.H."/>
            <person name="Gomi K."/>
            <person name="Griffith-Jones S."/>
            <person name="Gwilliam R."/>
            <person name="Haas B.J."/>
            <person name="Haas H."/>
            <person name="Harris D.E."/>
            <person name="Horiuchi H."/>
            <person name="Huang J."/>
            <person name="Humphray S."/>
            <person name="Jimenez J."/>
            <person name="Keller N."/>
            <person name="Khouri H."/>
            <person name="Kitamoto K."/>
            <person name="Kobayashi T."/>
            <person name="Konzack S."/>
            <person name="Kulkarni R."/>
            <person name="Kumagai T."/>
            <person name="Lafton A."/>
            <person name="Latge J.-P."/>
            <person name="Li W."/>
            <person name="Lord A."/>
            <person name="Lu C."/>
            <person name="Majoros W.H."/>
            <person name="May G.S."/>
            <person name="Miller B.L."/>
            <person name="Mohamoud Y."/>
            <person name="Molina M."/>
            <person name="Monod M."/>
            <person name="Mouyna I."/>
            <person name="Mulligan S."/>
            <person name="Murphy L.D."/>
            <person name="O'Neil S."/>
            <person name="Paulsen I."/>
            <person name="Penalva M.A."/>
            <person name="Pertea M."/>
            <person name="Price C."/>
            <person name="Pritchard B.L."/>
            <person name="Quail M.A."/>
            <person name="Rabbinowitsch E."/>
            <person name="Rawlins N."/>
            <person name="Rajandream M.A."/>
            <person name="Reichard U."/>
            <person name="Renauld H."/>
            <person name="Robson G.D."/>
            <person name="Rodriguez de Cordoba S."/>
            <person name="Rodriguez-Pena J.M."/>
            <person name="Ronning C.M."/>
            <person name="Rutter S."/>
            <person name="Salzberg S.L."/>
            <person name="Sanchez M."/>
            <person name="Sanchez-Ferrero J.C."/>
            <person name="Saunders D."/>
            <person name="Seeger K."/>
            <person name="Squares R."/>
            <person name="Squares S."/>
            <person name="Takeuchi M."/>
            <person name="Tekaia F."/>
            <person name="Turner G."/>
            <person name="Vazquez de Aldana C.R."/>
            <person name="Weidman J."/>
            <person name="White O."/>
            <person name="Woodward J.R."/>
            <person name="Yu J.-H."/>
            <person name="Fraser C.M."/>
            <person name="Galagan J.E."/>
            <person name="Asai K."/>
            <person name="Machida M."/>
            <person name="Hall N."/>
            <person name="Barrell B.G."/>
            <person name="Denning D.W."/>
        </authorList>
    </citation>
    <scope>NUCLEOTIDE SEQUENCE [LARGE SCALE GENOMIC DNA]</scope>
    <source>
        <strain>ATCC MYA-4609 / CBS 101355 / FGSC A1100 / Af293</strain>
    </source>
</reference>
<feature type="chain" id="PRO_0000306786" description="Dicer-like protein 2">
    <location>
        <begin position="1"/>
        <end position="1388"/>
    </location>
</feature>
<feature type="domain" description="Helicase ATP-binding" evidence="3">
    <location>
        <begin position="23"/>
        <end position="203"/>
    </location>
</feature>
<feature type="domain" description="Helicase C-terminal" evidence="4">
    <location>
        <begin position="368"/>
        <end position="537"/>
    </location>
</feature>
<feature type="domain" description="Dicer dsRNA-binding fold" evidence="5">
    <location>
        <begin position="564"/>
        <end position="658"/>
    </location>
</feature>
<feature type="domain" description="RNase III 1" evidence="2">
    <location>
        <begin position="906"/>
        <end position="1059"/>
    </location>
</feature>
<feature type="domain" description="RNase III 2" evidence="2">
    <location>
        <begin position="1098"/>
        <end position="1281"/>
    </location>
</feature>
<feature type="short sequence motif" description="DEAH box">
    <location>
        <begin position="144"/>
        <end position="147"/>
    </location>
</feature>
<feature type="binding site" evidence="3">
    <location>
        <begin position="36"/>
        <end position="43"/>
    </location>
    <ligand>
        <name>ATP</name>
        <dbReference type="ChEBI" id="CHEBI:30616"/>
    </ligand>
</feature>
<feature type="binding site" evidence="1">
    <location>
        <position position="1137"/>
    </location>
    <ligand>
        <name>Mg(2+)</name>
        <dbReference type="ChEBI" id="CHEBI:18420"/>
    </ligand>
</feature>
<feature type="binding site" evidence="1">
    <location>
        <position position="1267"/>
    </location>
    <ligand>
        <name>Mg(2+)</name>
        <dbReference type="ChEBI" id="CHEBI:18420"/>
    </ligand>
</feature>
<feature type="binding site" evidence="1">
    <location>
        <position position="1270"/>
    </location>
    <ligand>
        <name>Mg(2+)</name>
        <dbReference type="ChEBI" id="CHEBI:18420"/>
    </ligand>
</feature>
<feature type="site" description="Important for activity" evidence="1">
    <location>
        <position position="1263"/>
    </location>
</feature>
<protein>
    <recommendedName>
        <fullName>Dicer-like protein 2</fullName>
    </recommendedName>
    <domain>
        <recommendedName>
            <fullName>Endoribonuclease dcl2</fullName>
            <ecNumber>3.1.26.-</ecNumber>
        </recommendedName>
    </domain>
    <domain>
        <recommendedName>
            <fullName>ATP-dependent helicase dcl2</fullName>
            <ecNumber>3.6.4.-</ecNumber>
        </recommendedName>
    </domain>
</protein>
<proteinExistence type="inferred from homology"/>
<dbReference type="EC" id="3.1.26.-"/>
<dbReference type="EC" id="3.6.4.-"/>
<dbReference type="EMBL" id="AAHF01000016">
    <property type="protein sequence ID" value="EAL84441.1"/>
    <property type="status" value="ALT_SEQ"/>
    <property type="molecule type" value="Genomic_DNA"/>
</dbReference>
<dbReference type="RefSeq" id="XP_746479.1">
    <property type="nucleotide sequence ID" value="XM_741386.1"/>
</dbReference>
<dbReference type="SMR" id="Q4WA22"/>
<dbReference type="STRING" id="330879.Q4WA22"/>
<dbReference type="GeneID" id="3503874"/>
<dbReference type="KEGG" id="afm:AFUA_4G02930"/>
<dbReference type="eggNOG" id="KOG0701">
    <property type="taxonomic scope" value="Eukaryota"/>
</dbReference>
<dbReference type="HOGENOM" id="CLU_000907_4_6_1"/>
<dbReference type="InParanoid" id="Q4WA22"/>
<dbReference type="OrthoDB" id="416741at2759"/>
<dbReference type="Proteomes" id="UP000002530">
    <property type="component" value="Chromosome 4"/>
</dbReference>
<dbReference type="GO" id="GO:0005737">
    <property type="term" value="C:cytoplasm"/>
    <property type="evidence" value="ECO:0000318"/>
    <property type="project" value="GO_Central"/>
</dbReference>
<dbReference type="GO" id="GO:0005634">
    <property type="term" value="C:nucleus"/>
    <property type="evidence" value="ECO:0000318"/>
    <property type="project" value="GO_Central"/>
</dbReference>
<dbReference type="GO" id="GO:0005524">
    <property type="term" value="F:ATP binding"/>
    <property type="evidence" value="ECO:0007669"/>
    <property type="project" value="UniProtKB-KW"/>
</dbReference>
<dbReference type="GO" id="GO:0004386">
    <property type="term" value="F:helicase activity"/>
    <property type="evidence" value="ECO:0007669"/>
    <property type="project" value="UniProtKB-KW"/>
</dbReference>
<dbReference type="GO" id="GO:0046872">
    <property type="term" value="F:metal ion binding"/>
    <property type="evidence" value="ECO:0007669"/>
    <property type="project" value="UniProtKB-KW"/>
</dbReference>
<dbReference type="GO" id="GO:0004525">
    <property type="term" value="F:ribonuclease III activity"/>
    <property type="evidence" value="ECO:0000318"/>
    <property type="project" value="GO_Central"/>
</dbReference>
<dbReference type="GO" id="GO:0003723">
    <property type="term" value="F:RNA binding"/>
    <property type="evidence" value="ECO:0000318"/>
    <property type="project" value="GO_Central"/>
</dbReference>
<dbReference type="GO" id="GO:0051607">
    <property type="term" value="P:defense response to virus"/>
    <property type="evidence" value="ECO:0007669"/>
    <property type="project" value="UniProtKB-KW"/>
</dbReference>
<dbReference type="GO" id="GO:0050688">
    <property type="term" value="P:regulation of defense response to virus"/>
    <property type="evidence" value="ECO:0007669"/>
    <property type="project" value="UniProtKB-KW"/>
</dbReference>
<dbReference type="GO" id="GO:0030422">
    <property type="term" value="P:siRNA processing"/>
    <property type="evidence" value="ECO:0000318"/>
    <property type="project" value="GO_Central"/>
</dbReference>
<dbReference type="CDD" id="cd18034">
    <property type="entry name" value="DEXHc_dicer"/>
    <property type="match status" value="1"/>
</dbReference>
<dbReference type="CDD" id="cd00593">
    <property type="entry name" value="RIBOc"/>
    <property type="match status" value="2"/>
</dbReference>
<dbReference type="CDD" id="cd18802">
    <property type="entry name" value="SF2_C_dicer"/>
    <property type="match status" value="1"/>
</dbReference>
<dbReference type="FunFam" id="1.10.1520.10:FF:000015">
    <property type="entry name" value="Dicer-like protein 1"/>
    <property type="match status" value="1"/>
</dbReference>
<dbReference type="FunFam" id="3.40.50.300:FF:001669">
    <property type="entry name" value="Dicer-like protein 1"/>
    <property type="match status" value="1"/>
</dbReference>
<dbReference type="FunFam" id="1.10.1520.10:FF:000032">
    <property type="entry name" value="Dicer-like protein 2"/>
    <property type="match status" value="1"/>
</dbReference>
<dbReference type="FunFam" id="3.30.160.380:FF:000005">
    <property type="entry name" value="Dicer-like protein 2"/>
    <property type="match status" value="1"/>
</dbReference>
<dbReference type="FunFam" id="3.40.50.300:FF:002480">
    <property type="entry name" value="Dicer-like protein 2"/>
    <property type="match status" value="1"/>
</dbReference>
<dbReference type="Gene3D" id="3.30.160.380">
    <property type="entry name" value="Dicer dimerisation domain"/>
    <property type="match status" value="1"/>
</dbReference>
<dbReference type="Gene3D" id="3.40.50.300">
    <property type="entry name" value="P-loop containing nucleotide triphosphate hydrolases"/>
    <property type="match status" value="2"/>
</dbReference>
<dbReference type="Gene3D" id="1.10.1520.10">
    <property type="entry name" value="Ribonuclease III domain"/>
    <property type="match status" value="2"/>
</dbReference>
<dbReference type="InterPro" id="IPR011545">
    <property type="entry name" value="DEAD/DEAH_box_helicase_dom"/>
</dbReference>
<dbReference type="InterPro" id="IPR038248">
    <property type="entry name" value="Dicer_dimer_sf"/>
</dbReference>
<dbReference type="InterPro" id="IPR005034">
    <property type="entry name" value="Dicer_dimerisation_dom"/>
</dbReference>
<dbReference type="InterPro" id="IPR014001">
    <property type="entry name" value="Helicase_ATP-bd"/>
</dbReference>
<dbReference type="InterPro" id="IPR001650">
    <property type="entry name" value="Helicase_C-like"/>
</dbReference>
<dbReference type="InterPro" id="IPR027417">
    <property type="entry name" value="P-loop_NTPase"/>
</dbReference>
<dbReference type="InterPro" id="IPR000999">
    <property type="entry name" value="RNase_III_dom"/>
</dbReference>
<dbReference type="InterPro" id="IPR036389">
    <property type="entry name" value="RNase_III_sf"/>
</dbReference>
<dbReference type="PANTHER" id="PTHR14950">
    <property type="entry name" value="DICER-RELATED"/>
    <property type="match status" value="1"/>
</dbReference>
<dbReference type="PANTHER" id="PTHR14950:SF37">
    <property type="entry name" value="ENDORIBONUCLEASE DICER"/>
    <property type="match status" value="1"/>
</dbReference>
<dbReference type="Pfam" id="PF00270">
    <property type="entry name" value="DEAD"/>
    <property type="match status" value="1"/>
</dbReference>
<dbReference type="Pfam" id="PF03368">
    <property type="entry name" value="Dicer_dimer"/>
    <property type="match status" value="1"/>
</dbReference>
<dbReference type="Pfam" id="PF00271">
    <property type="entry name" value="Helicase_C"/>
    <property type="match status" value="1"/>
</dbReference>
<dbReference type="Pfam" id="PF00636">
    <property type="entry name" value="Ribonuclease_3"/>
    <property type="match status" value="2"/>
</dbReference>
<dbReference type="SMART" id="SM00487">
    <property type="entry name" value="DEXDc"/>
    <property type="match status" value="1"/>
</dbReference>
<dbReference type="SMART" id="SM00490">
    <property type="entry name" value="HELICc"/>
    <property type="match status" value="1"/>
</dbReference>
<dbReference type="SMART" id="SM00535">
    <property type="entry name" value="RIBOc"/>
    <property type="match status" value="2"/>
</dbReference>
<dbReference type="SUPFAM" id="SSF52540">
    <property type="entry name" value="P-loop containing nucleoside triphosphate hydrolases"/>
    <property type="match status" value="1"/>
</dbReference>
<dbReference type="SUPFAM" id="SSF69065">
    <property type="entry name" value="RNase III domain-like"/>
    <property type="match status" value="2"/>
</dbReference>
<dbReference type="PROSITE" id="PS51327">
    <property type="entry name" value="DICER_DSRBF"/>
    <property type="match status" value="1"/>
</dbReference>
<dbReference type="PROSITE" id="PS51192">
    <property type="entry name" value="HELICASE_ATP_BIND_1"/>
    <property type="match status" value="1"/>
</dbReference>
<dbReference type="PROSITE" id="PS51194">
    <property type="entry name" value="HELICASE_CTER"/>
    <property type="match status" value="1"/>
</dbReference>
<dbReference type="PROSITE" id="PS00517">
    <property type="entry name" value="RNASE_3_1"/>
    <property type="match status" value="1"/>
</dbReference>
<dbReference type="PROSITE" id="PS50142">
    <property type="entry name" value="RNASE_3_2"/>
    <property type="match status" value="2"/>
</dbReference>
<keyword id="KW-0051">Antiviral defense</keyword>
<keyword id="KW-0930">Antiviral protein</keyword>
<keyword id="KW-0067">ATP-binding</keyword>
<keyword id="KW-0347">Helicase</keyword>
<keyword id="KW-0378">Hydrolase</keyword>
<keyword id="KW-0460">Magnesium</keyword>
<keyword id="KW-0464">Manganese</keyword>
<keyword id="KW-0479">Metal-binding</keyword>
<keyword id="KW-0547">Nucleotide-binding</keyword>
<keyword id="KW-1185">Reference proteome</keyword>
<keyword id="KW-0677">Repeat</keyword>
<keyword id="KW-0694">RNA-binding</keyword>
<comment type="function">
    <text evidence="1">Dicer-like endonuclease involved in cleaving double-stranded RNA in the RNA interference (RNAi) pathway. Produces 21 to 25 bp dsRNAs (siRNAs) which target the selective destruction of homologous RNAs leading to sequence-specific suppression of gene expression, called post-transcriptional gene silencing (PTGS). Part of a broad host defense response against viral infection and transposons (By similarity).</text>
</comment>
<comment type="cofactor">
    <cofactor evidence="1">
        <name>Mg(2+)</name>
        <dbReference type="ChEBI" id="CHEBI:18420"/>
    </cofactor>
    <cofactor evidence="1">
        <name>Mn(2+)</name>
        <dbReference type="ChEBI" id="CHEBI:29035"/>
    </cofactor>
</comment>
<comment type="similarity">
    <text evidence="5">Belongs to the helicase family. Dicer subfamily.</text>
</comment>
<comment type="sequence caution" evidence="6">
    <conflict type="erroneous gene model prediction">
        <sequence resource="EMBL-CDS" id="EAL84441"/>
    </conflict>
</comment>
<accession>Q4WA22</accession>